<geneLocation type="plasmid">
    <name>pSCATT</name>
</geneLocation>
<feature type="chain" id="PRO_0000447349" description="4-chloro-allylglycine synthase">
    <location>
        <begin position="1"/>
        <end position="257"/>
    </location>
</feature>
<feature type="binding site" evidence="1">
    <location>
        <position position="112"/>
    </location>
    <ligand>
        <name>Fe cation</name>
        <dbReference type="ChEBI" id="CHEBI:24875"/>
        <label>1</label>
    </ligand>
</feature>
<feature type="binding site" evidence="1">
    <location>
        <position position="112"/>
    </location>
    <ligand>
        <name>Fe cation</name>
        <dbReference type="ChEBI" id="CHEBI:24875"/>
        <label>2</label>
    </ligand>
</feature>
<feature type="binding site" evidence="1">
    <location>
        <position position="119"/>
    </location>
    <ligand>
        <name>Fe cation</name>
        <dbReference type="ChEBI" id="CHEBI:24875"/>
        <label>1</label>
    </ligand>
</feature>
<feature type="binding site" evidence="1">
    <location>
        <position position="173"/>
    </location>
    <ligand>
        <name>Fe cation</name>
        <dbReference type="ChEBI" id="CHEBI:24875"/>
        <label>2</label>
    </ligand>
</feature>
<feature type="binding site" evidence="1">
    <location>
        <position position="203"/>
    </location>
    <ligand>
        <name>Fe cation</name>
        <dbReference type="ChEBI" id="CHEBI:24875"/>
        <label>1</label>
    </ligand>
</feature>
<feature type="binding site" evidence="1">
    <location>
        <position position="207"/>
    </location>
    <ligand>
        <name>Fe cation</name>
        <dbReference type="ChEBI" id="CHEBI:24875"/>
        <label>2</label>
    </ligand>
</feature>
<feature type="binding site" evidence="1">
    <location>
        <position position="210"/>
    </location>
    <ligand>
        <name>Fe cation</name>
        <dbReference type="ChEBI" id="CHEBI:24875"/>
        <label>2</label>
    </ligand>
</feature>
<feature type="helix" evidence="6">
    <location>
        <begin position="27"/>
        <end position="32"/>
    </location>
</feature>
<feature type="helix" evidence="6">
    <location>
        <begin position="34"/>
        <end position="48"/>
    </location>
</feature>
<feature type="turn" evidence="6">
    <location>
        <begin position="51"/>
        <end position="53"/>
    </location>
</feature>
<feature type="helix" evidence="6">
    <location>
        <begin position="56"/>
        <end position="61"/>
    </location>
</feature>
<feature type="helix" evidence="6">
    <location>
        <begin position="68"/>
        <end position="82"/>
    </location>
</feature>
<feature type="helix" evidence="6">
    <location>
        <begin position="85"/>
        <end position="90"/>
    </location>
</feature>
<feature type="helix" evidence="6">
    <location>
        <begin position="91"/>
        <end position="95"/>
    </location>
</feature>
<feature type="helix" evidence="6">
    <location>
        <begin position="99"/>
        <end position="113"/>
    </location>
</feature>
<feature type="strand" evidence="6">
    <location>
        <begin position="114"/>
        <end position="117"/>
    </location>
</feature>
<feature type="helix" evidence="6">
    <location>
        <begin position="119"/>
        <end position="129"/>
    </location>
</feature>
<feature type="helix" evidence="6">
    <location>
        <begin position="134"/>
        <end position="138"/>
    </location>
</feature>
<feature type="helix" evidence="6">
    <location>
        <begin position="144"/>
        <end position="158"/>
    </location>
</feature>
<feature type="helix" evidence="6">
    <location>
        <begin position="162"/>
        <end position="190"/>
    </location>
</feature>
<feature type="helix" evidence="6">
    <location>
        <begin position="196"/>
        <end position="201"/>
    </location>
</feature>
<feature type="helix" evidence="6">
    <location>
        <begin position="213"/>
        <end position="218"/>
    </location>
</feature>
<feature type="helix" evidence="6">
    <location>
        <begin position="219"/>
        <end position="221"/>
    </location>
</feature>
<feature type="strand" evidence="6">
    <location>
        <begin position="222"/>
        <end position="224"/>
    </location>
</feature>
<feature type="helix" evidence="6">
    <location>
        <begin position="225"/>
        <end position="253"/>
    </location>
</feature>
<dbReference type="EC" id="1.14.99.-" evidence="2"/>
<dbReference type="EMBL" id="CP003229">
    <property type="protein sequence ID" value="AEW98882.1"/>
    <property type="molecule type" value="Genomic_DNA"/>
</dbReference>
<dbReference type="RefSeq" id="WP_014151496.1">
    <property type="nucleotide sequence ID" value="NC_016113.1"/>
</dbReference>
<dbReference type="PDB" id="7TWA">
    <property type="method" value="X-ray"/>
    <property type="resolution" value="1.70 A"/>
    <property type="chains" value="A/B/C/D=1-257"/>
</dbReference>
<dbReference type="PDBsum" id="7TWA"/>
<dbReference type="SMR" id="F8JJ25"/>
<dbReference type="KEGG" id="sct:SCAT_p1047"/>
<dbReference type="KEGG" id="scy:SCATT_p06890"/>
<dbReference type="PATRIC" id="fig|1003195.11.peg.1005"/>
<dbReference type="HOGENOM" id="CLU_1081474_0_0_11"/>
<dbReference type="OrthoDB" id="4077055at2"/>
<dbReference type="Proteomes" id="UP000007842">
    <property type="component" value="Plasmid pSCATT"/>
</dbReference>
<dbReference type="GO" id="GO:0062146">
    <property type="term" value="F:4-chloro-allylglycine synthase activity"/>
    <property type="evidence" value="ECO:0000314"/>
    <property type="project" value="UniProtKB"/>
</dbReference>
<dbReference type="GO" id="GO:0046872">
    <property type="term" value="F:metal ion binding"/>
    <property type="evidence" value="ECO:0007669"/>
    <property type="project" value="UniProtKB-KW"/>
</dbReference>
<dbReference type="GO" id="GO:0017000">
    <property type="term" value="P:antibiotic biosynthetic process"/>
    <property type="evidence" value="ECO:0007669"/>
    <property type="project" value="UniProtKB-KW"/>
</dbReference>
<dbReference type="GO" id="GO:0062142">
    <property type="term" value="P:L-beta-ethynylserine biosynthetic process"/>
    <property type="evidence" value="ECO:0000315"/>
    <property type="project" value="UniProtKB"/>
</dbReference>
<dbReference type="GO" id="GO:0062143">
    <property type="term" value="P:L-propargylglycine biosynthetic process"/>
    <property type="evidence" value="ECO:0000315"/>
    <property type="project" value="UniProtKB"/>
</dbReference>
<dbReference type="Gene3D" id="1.20.910.10">
    <property type="entry name" value="Heme oxygenase-like"/>
    <property type="match status" value="1"/>
</dbReference>
<dbReference type="InterPro" id="IPR053702">
    <property type="entry name" value="Alkyne_AA_Synthase"/>
</dbReference>
<dbReference type="InterPro" id="IPR016084">
    <property type="entry name" value="Haem_Oase-like_multi-hlx"/>
</dbReference>
<dbReference type="InterPro" id="IPR039068">
    <property type="entry name" value="PqqC-like"/>
</dbReference>
<dbReference type="NCBIfam" id="NF042919">
    <property type="entry name" value="ChlAlygly_Syn_BesC"/>
    <property type="match status" value="1"/>
</dbReference>
<dbReference type="PANTHER" id="PTHR40279:SF3">
    <property type="entry name" value="4-AMINOBENZOATE SYNTHASE"/>
    <property type="match status" value="1"/>
</dbReference>
<dbReference type="PANTHER" id="PTHR40279">
    <property type="entry name" value="PQQC-LIKE PROTEIN"/>
    <property type="match status" value="1"/>
</dbReference>
<dbReference type="Pfam" id="PF14518">
    <property type="entry name" value="Haem_oxygenas_2"/>
    <property type="match status" value="1"/>
</dbReference>
<dbReference type="SMART" id="SM01236">
    <property type="entry name" value="Haem_oxygenase_2"/>
    <property type="match status" value="1"/>
</dbReference>
<dbReference type="SUPFAM" id="SSF48613">
    <property type="entry name" value="Heme oxygenase-like"/>
    <property type="match status" value="1"/>
</dbReference>
<protein>
    <recommendedName>
        <fullName evidence="4">4-chloro-allylglycine synthase</fullName>
        <ecNumber evidence="2">1.14.99.-</ecNumber>
    </recommendedName>
    <alternativeName>
        <fullName evidence="4">L-2-amino-4-chloropent-4-enoate synthase</fullName>
    </alternativeName>
</protein>
<sequence length="257" mass="29443">MTDLNTPESTSKPVWEHFDHVEPGIRRRIAVADPEIKEYLDGMLARIASHRGVEHPFLNAYRTTALDPEQERHLFSECYYFFRYLPFYITGMAVKTRDEMILREIILNVADEVGSDPTHSTLFADFLARIGIDKEHLDGYQPLEVTRQLNDGIRHLYTETSINKALGALYADETMSSIMVSKINDGLRNQGYDDDLRHFWQLHIDVEVGHSNSVFNAIAPYVGSKAARAEFEEGVFEFLGLVERYWDGVRELVGIGK</sequence>
<organism>
    <name type="scientific">Streptantibioticus cattleyicolor (strain ATCC 35852 / DSM 46488 / JCM 4925 / NBRC 14057 / NRRL 8057)</name>
    <name type="common">Streptomyces cattleya</name>
    <dbReference type="NCBI Taxonomy" id="1003195"/>
    <lineage>
        <taxon>Bacteria</taxon>
        <taxon>Bacillati</taxon>
        <taxon>Actinomycetota</taxon>
        <taxon>Actinomycetes</taxon>
        <taxon>Kitasatosporales</taxon>
        <taxon>Streptomycetaceae</taxon>
        <taxon>Streptantibioticus</taxon>
    </lineage>
</organism>
<reference key="1">
    <citation type="submission" date="2011-12" db="EMBL/GenBank/DDBJ databases">
        <title>Complete genome sequence of Streptomyces cattleya strain DSM 46488.</title>
        <authorList>
            <person name="Ou H.-Y."/>
            <person name="Li P."/>
            <person name="Zhao C."/>
            <person name="O'Hagan D."/>
            <person name="Deng Z."/>
        </authorList>
    </citation>
    <scope>NUCLEOTIDE SEQUENCE [LARGE SCALE GENOMIC DNA]</scope>
    <source>
        <strain>ATCC 35852 / DSM 46488 / JCM 4925 / NBRC 14057 / NCIMB 11928 / NRRL 8057 / MA-4297</strain>
    </source>
</reference>
<reference key="2">
    <citation type="journal article" date="2019" name="Nature">
        <title>Discovery of a pathway for terminal-alkyne amino acid biosynthesis.</title>
        <authorList>
            <person name="Marchand J.A."/>
            <person name="Neugebauer M.E."/>
            <person name="Ing M.C."/>
            <person name="Lin C.I."/>
            <person name="Pelton J.G."/>
            <person name="Chang M.C.Y."/>
        </authorList>
    </citation>
    <scope>FUNCTION</scope>
    <scope>CATALYTIC ACTIVITY</scope>
    <scope>COFACTOR</scope>
    <scope>PATHWAY</scope>
    <scope>DISRUPTION PHENOTYPE</scope>
    <source>
        <strain>ATCC 35852 / DSM 46488 / JCM 4925 / NBRC 14057 / NCIMB 11928 / NRRL 8057 / MA-4297</strain>
    </source>
</reference>
<name>BESC_STREN</name>
<keyword id="KW-0002">3D-structure</keyword>
<keyword id="KW-0028">Amino-acid biosynthesis</keyword>
<keyword id="KW-0045">Antibiotic biosynthesis</keyword>
<keyword id="KW-0408">Iron</keyword>
<keyword id="KW-0479">Metal-binding</keyword>
<keyword id="KW-0560">Oxidoreductase</keyword>
<keyword id="KW-0614">Plasmid</keyword>
<keyword id="KW-1185">Reference proteome</keyword>
<gene>
    <name evidence="3" type="primary">besC</name>
    <name evidence="5" type="ordered locus">SCATT_p06890</name>
</gene>
<accession>F8JJ25</accession>
<accession>G8XHD6</accession>
<evidence type="ECO:0000250" key="1">
    <source>
        <dbReference type="UniProtKB" id="O84616"/>
    </source>
</evidence>
<evidence type="ECO:0000269" key="2">
    <source>
    </source>
</evidence>
<evidence type="ECO:0000303" key="3">
    <source>
    </source>
</evidence>
<evidence type="ECO:0000305" key="4">
    <source>
    </source>
</evidence>
<evidence type="ECO:0000312" key="5">
    <source>
        <dbReference type="EMBL" id="AEW98882.1"/>
    </source>
</evidence>
<evidence type="ECO:0007829" key="6">
    <source>
        <dbReference type="PDB" id="7TWA"/>
    </source>
</evidence>
<proteinExistence type="evidence at protein level"/>
<comment type="function">
    <text evidence="2">Involved in the biosynthesis of terminal alkyne-containing amino acids such as L-propargylglycine (Pra) and L-beta-ethynylserine, that are produced as antibiotics by S.cattleya. Catalyzes an oxidative C-C bond cleavage in 4-chloro-L-lysine to form 4-chloro-allyl-L-glycine (also named L-2-amino-4-chloropent-4-enoate), with release of formaldehyde and ammonia. Is also able to react with L-lysine directly to produce allylglycine in vitro.</text>
</comment>
<comment type="catalytic activity">
    <reaction evidence="2">
        <text>4-chloro-L-lysine + AH2 + O2 = L-2-amino-4-chloropent-4-enoate + formaldehyde + A + NH4(+) + H2O</text>
        <dbReference type="Rhea" id="RHEA:59888"/>
        <dbReference type="ChEBI" id="CHEBI:13193"/>
        <dbReference type="ChEBI" id="CHEBI:15377"/>
        <dbReference type="ChEBI" id="CHEBI:15379"/>
        <dbReference type="ChEBI" id="CHEBI:16842"/>
        <dbReference type="ChEBI" id="CHEBI:17499"/>
        <dbReference type="ChEBI" id="CHEBI:28938"/>
        <dbReference type="ChEBI" id="CHEBI:57555"/>
        <dbReference type="ChEBI" id="CHEBI:143276"/>
    </reaction>
    <physiologicalReaction direction="left-to-right" evidence="2">
        <dbReference type="Rhea" id="RHEA:59889"/>
    </physiologicalReaction>
</comment>
<comment type="cofactor">
    <cofactor evidence="2">
        <name>Fe(2+)</name>
        <dbReference type="ChEBI" id="CHEBI:29033"/>
    </cofactor>
    <text evidence="1">Binds 2 Fe(2+) ions per subunit.</text>
</comment>
<comment type="pathway">
    <text evidence="2">Amino-acid metabolism.</text>
</comment>
<comment type="pathway">
    <text evidence="2">Antibiotic biosynthesis.</text>
</comment>
<comment type="disruption phenotype">
    <text evidence="2">Cells lacking this gene no longer produce detectable amounts of L-propargylglycine and L-beta-ethynylserine, that are terminal alkyne-containing amino acids produced by wild-type S.cattleya.</text>
</comment>